<accession>Q9RY65</accession>
<reference key="1">
    <citation type="journal article" date="1999" name="Science">
        <title>Genome sequence of the radioresistant bacterium Deinococcus radiodurans R1.</title>
        <authorList>
            <person name="White O."/>
            <person name="Eisen J.A."/>
            <person name="Heidelberg J.F."/>
            <person name="Hickey E.K."/>
            <person name="Peterson J.D."/>
            <person name="Dodson R.J."/>
            <person name="Haft D.H."/>
            <person name="Gwinn M.L."/>
            <person name="Nelson W.C."/>
            <person name="Richardson D.L."/>
            <person name="Moffat K.S."/>
            <person name="Qin H."/>
            <person name="Jiang L."/>
            <person name="Pamphile W."/>
            <person name="Crosby M."/>
            <person name="Shen M."/>
            <person name="Vamathevan J.J."/>
            <person name="Lam P."/>
            <person name="McDonald L.A."/>
            <person name="Utterback T.R."/>
            <person name="Zalewski C."/>
            <person name="Makarova K.S."/>
            <person name="Aravind L."/>
            <person name="Daly M.J."/>
            <person name="Minton K.W."/>
            <person name="Fleischmann R.D."/>
            <person name="Ketchum K.A."/>
            <person name="Nelson K.E."/>
            <person name="Salzberg S.L."/>
            <person name="Smith H.O."/>
            <person name="Venter J.C."/>
            <person name="Fraser C.M."/>
        </authorList>
    </citation>
    <scope>NUCLEOTIDE SEQUENCE [LARGE SCALE GENOMIC DNA]</scope>
    <source>
        <strain>ATCC 13939 / DSM 20539 / JCM 16871 / CCUG 27074 / LMG 4051 / NBRC 15346 / NCIMB 9279 / VKM B-1422 / R1</strain>
    </source>
</reference>
<reference key="2">
    <citation type="journal article" date="2001" name="Cell">
        <title>High resolution structure of the large ribosomal subunit from a mesophilic eubacterium.</title>
        <authorList>
            <person name="Harms J."/>
            <person name="Schluenzen F."/>
            <person name="Zarivach R."/>
            <person name="Bashan A."/>
            <person name="Gat S."/>
            <person name="Agmon I."/>
            <person name="Bartels H."/>
            <person name="Franceschi F."/>
            <person name="Yonath A."/>
        </authorList>
    </citation>
    <scope>X-RAY CRYSTALLOGRAPHY (3.1 ANGSTROMS) OF THE 50S SUBUNIT</scope>
    <scope>PROTEIN SEQUENCE OF 1-5</scope>
    <source>
        <strain>ATCC 13939 / DSM 20539 / JCM 16871 / CCUG 27074 / LMG 4051 / NBRC 15346 / NCIMB 9279 / VKM B-1422 / R1</strain>
    </source>
</reference>
<reference key="3">
    <citation type="journal article" date="2001" name="Nature">
        <title>Structural basis for the interaction of antibiotics with the peptidyl transferase centre in eubacteria.</title>
        <authorList>
            <person name="Schluenzen F."/>
            <person name="Zarivach R."/>
            <person name="Harms J."/>
            <person name="Bashan A."/>
            <person name="Tocilj A."/>
            <person name="Albrecht R."/>
            <person name="Yonath A."/>
            <person name="Franceschi F."/>
        </authorList>
    </citation>
    <scope>X-RAY CRYSTALLOGRAPHY (3.1 ANGSTROMS) OF THE 50S SUBUNIT IN COMPLEX WITH FIVE ANTIBIOTICS</scope>
    <source>
        <strain>ATCC 13939 / DSM 20539 / JCM 16871 / CCUG 27074 / LMG 4051 / NBRC 15346 / NCIMB 9279 / VKM B-1422 / R1</strain>
    </source>
</reference>
<reference key="4">
    <citation type="journal article" date="2003" name="Mol. Cell">
        <title>Structural basis of the ribosomal machinery for peptide bond formation, translocation, and nascent chain progression.</title>
        <authorList>
            <person name="Bashan A."/>
            <person name="Agmon I."/>
            <person name="Zarivach R."/>
            <person name="Schluenzen F."/>
            <person name="Harms J."/>
            <person name="Berisio R."/>
            <person name="Bartels H."/>
            <person name="Franceschi F."/>
            <person name="Auerbach T."/>
            <person name="Hansen H.A."/>
            <person name="Kossoy E."/>
            <person name="Kessler M."/>
            <person name="Yonath A."/>
        </authorList>
    </citation>
    <scope>X-RAY CRYSTALLOGRAPHY (3.5 ANGSTROMS) OF THE 50S SUBUNIT IN COMPLEX WITH TRNA MIMICS</scope>
    <source>
        <strain>ATCC 13939 / DSM 20539 / JCM 16871 / CCUG 27074 / LMG 4051 / NBRC 15346 / NCIMB 9279 / VKM B-1422 / R1</strain>
    </source>
</reference>
<reference key="5">
    <citation type="journal article" date="2003" name="Structure">
        <title>Structural basis for the antibiotic activity of ketolides and azalides.</title>
        <authorList>
            <person name="Schluenzen F."/>
            <person name="Harms J.M."/>
            <person name="Franceschi F."/>
            <person name="Hansen H.A."/>
            <person name="Bartels H."/>
            <person name="Zarivach R."/>
            <person name="Yonath A."/>
        </authorList>
    </citation>
    <scope>X-RAY CRYSTALLOGRAPHY (3.3 ANGSTROMS) OF THE 50S SUBUNIT IN COMPLEX WITH MODIFIED MACROLIDE ANTIBIOTICS</scope>
    <source>
        <strain>ATCC 13939 / DSM 20539 / JCM 16871 / CCUG 27074 / LMG 4051 / NBRC 15346 / NCIMB 9279 / VKM B-1422 / R1</strain>
    </source>
</reference>
<reference key="6">
    <citation type="journal article" date="2003" name="Nat. Struct. Biol.">
        <title>Structural insight into the role of the ribosomal tunnel in cellular regulation.</title>
        <authorList>
            <person name="Berisio R."/>
            <person name="Schluenzen F."/>
            <person name="Harms J."/>
            <person name="Bashan A."/>
            <person name="Auerbach T."/>
            <person name="Baram D."/>
            <person name="Yonath A."/>
        </authorList>
    </citation>
    <scope>X-RAY CRYSTALLOGRAPHY (3.4 ANGSTROMS) OF THE 50S SUBUNIT IN COMPLEX WITH TROLEANDOMYCIN</scope>
    <source>
        <strain>ATCC 13939 / DSM 20539 / JCM 16871 / CCUG 27074 / LMG 4051 / NBRC 15346 / NCIMB 9279 / VKM B-1422 / R1</strain>
    </source>
</reference>
<reference key="7">
    <citation type="journal article" date="2004" name="BMC Biol.">
        <title>Alterations at the peptidyl transferase centre of the ribosome induced by the synergistic action of the streptogramins dalfopristin and quinupristin.</title>
        <authorList>
            <person name="Harms J.M."/>
            <person name="Schluenzen F."/>
            <person name="Fucini P."/>
            <person name="Bartels H."/>
            <person name="Yonath A."/>
        </authorList>
    </citation>
    <scope>X-RAY CRYSTALLOGRAPHY (3.4 ANGSTROMS) OF THE 50S SUBUNIT IN COMPLEX WITH THE STREPTOGRAMINS QUINUPRISTIN AND DALFOPRISTIN</scope>
    <source>
        <strain>ATCC 13939 / DSM 20539 / JCM 16871 / CCUG 27074 / LMG 4051 / NBRC 15346 / NCIMB 9279 / VKM B-1422 / R1</strain>
    </source>
</reference>
<reference key="8">
    <citation type="journal article" date="2004" name="Mol. Microbiol.">
        <title>Inhibition of peptide bond formation by pleuromutilins: the structure of the 50S ribosomal subunit from Deinococcus radiodurans in complex with tiamulin.</title>
        <authorList>
            <person name="Schluenzen F."/>
            <person name="Pyetan E."/>
            <person name="Fucini P."/>
            <person name="Yonath A."/>
            <person name="Harms J.M."/>
        </authorList>
    </citation>
    <scope>X-RAY CRYSTALLOGRAPHY (3.5 ANGSTROMS) OF THE 50S SUBUNIT IN COMPLEX WITH TIAMULIN</scope>
    <source>
        <strain>ATCC 13939 / DSM 20539 / JCM 16871 / CCUG 27074 / LMG 4051 / NBRC 15346 / NCIMB 9279 / VKM B-1422 / R1</strain>
    </source>
</reference>
<sequence length="91" mass="9590">MAHKKGVGSSKNGRDSNPKYLGVKKFGGEVVKAGNILVRQRGTKFKAGQGVGMGRDHTLFALSDGKVVFINKGKGARFISIEAAQTEVAAD</sequence>
<proteinExistence type="evidence at protein level"/>
<evidence type="ECO:0000269" key="1">
    <source>
    </source>
</evidence>
<evidence type="ECO:0000269" key="2">
    <source>
    </source>
</evidence>
<evidence type="ECO:0000269" key="3">
    <source>
    </source>
</evidence>
<evidence type="ECO:0000269" key="4">
    <source>
    </source>
</evidence>
<evidence type="ECO:0000269" key="5">
    <source>
    </source>
</evidence>
<evidence type="ECO:0000269" key="6">
    <source>
    </source>
</evidence>
<evidence type="ECO:0000305" key="7"/>
<evidence type="ECO:0007829" key="8">
    <source>
        <dbReference type="PDB" id="1Y69"/>
    </source>
</evidence>
<evidence type="ECO:0007829" key="9">
    <source>
        <dbReference type="PDB" id="5DM6"/>
    </source>
</evidence>
<evidence type="ECO:0007829" key="10">
    <source>
        <dbReference type="PDB" id="7A18"/>
    </source>
</evidence>
<comment type="function">
    <text>Binds the 5S and 23S rRNAs and also the tRNA in the P site.</text>
</comment>
<comment type="subunit">
    <text evidence="1 2 3 4 5 6">Part of the 50S ribosomal subunit. Contacts protein L18.</text>
</comment>
<comment type="similarity">
    <text evidence="7">Belongs to the bacterial ribosomal protein bL27 family.</text>
</comment>
<name>RL27_DEIRA</name>
<dbReference type="EMBL" id="AE000513">
    <property type="protein sequence ID" value="AAF09678.1"/>
    <property type="molecule type" value="Genomic_DNA"/>
</dbReference>
<dbReference type="PIR" id="E75560">
    <property type="entry name" value="E75560"/>
</dbReference>
<dbReference type="RefSeq" id="NP_293811.1">
    <property type="nucleotide sequence ID" value="NC_001263.1"/>
</dbReference>
<dbReference type="RefSeq" id="WP_010886733.1">
    <property type="nucleotide sequence ID" value="NC_001263.1"/>
</dbReference>
<dbReference type="PDB" id="1NKW">
    <property type="method" value="X-ray"/>
    <property type="resolution" value="3.10 A"/>
    <property type="chains" value="U=1-91"/>
</dbReference>
<dbReference type="PDB" id="1NWX">
    <property type="method" value="X-ray"/>
    <property type="resolution" value="3.50 A"/>
    <property type="chains" value="U=1-91"/>
</dbReference>
<dbReference type="PDB" id="1NWY">
    <property type="method" value="X-ray"/>
    <property type="resolution" value="3.30 A"/>
    <property type="chains" value="U=1-91"/>
</dbReference>
<dbReference type="PDB" id="1SM1">
    <property type="method" value="X-ray"/>
    <property type="resolution" value="3.42 A"/>
    <property type="chains" value="U=1-91"/>
</dbReference>
<dbReference type="PDB" id="1XBP">
    <property type="method" value="X-ray"/>
    <property type="resolution" value="3.50 A"/>
    <property type="chains" value="U=1-91"/>
</dbReference>
<dbReference type="PDB" id="1Y69">
    <property type="method" value="X-ray"/>
    <property type="resolution" value="3.33 A"/>
    <property type="chains" value="U=1-91"/>
</dbReference>
<dbReference type="PDB" id="2ZJP">
    <property type="method" value="X-ray"/>
    <property type="resolution" value="3.70 A"/>
    <property type="chains" value="T=1-91"/>
</dbReference>
<dbReference type="PDB" id="2ZJQ">
    <property type="method" value="X-ray"/>
    <property type="resolution" value="3.30 A"/>
    <property type="chains" value="T=1-91"/>
</dbReference>
<dbReference type="PDB" id="2ZJR">
    <property type="method" value="X-ray"/>
    <property type="resolution" value="2.91 A"/>
    <property type="chains" value="T=1-91"/>
</dbReference>
<dbReference type="PDB" id="3CF5">
    <property type="method" value="X-ray"/>
    <property type="resolution" value="3.30 A"/>
    <property type="chains" value="T=1-91"/>
</dbReference>
<dbReference type="PDB" id="3DLL">
    <property type="method" value="X-ray"/>
    <property type="resolution" value="3.50 A"/>
    <property type="chains" value="T=1-91"/>
</dbReference>
<dbReference type="PDB" id="3PIO">
    <property type="method" value="X-ray"/>
    <property type="resolution" value="3.25 A"/>
    <property type="chains" value="T=1-91"/>
</dbReference>
<dbReference type="PDB" id="3PIP">
    <property type="method" value="X-ray"/>
    <property type="resolution" value="3.45 A"/>
    <property type="chains" value="T=1-91"/>
</dbReference>
<dbReference type="PDB" id="4IO9">
    <property type="method" value="X-ray"/>
    <property type="resolution" value="3.20 A"/>
    <property type="chains" value="T=1-91"/>
</dbReference>
<dbReference type="PDB" id="4IOA">
    <property type="method" value="X-ray"/>
    <property type="resolution" value="3.20 A"/>
    <property type="chains" value="T=1-91"/>
</dbReference>
<dbReference type="PDB" id="4IOC">
    <property type="method" value="X-ray"/>
    <property type="resolution" value="3.60 A"/>
    <property type="chains" value="T=1-91"/>
</dbReference>
<dbReference type="PDB" id="4U67">
    <property type="method" value="X-ray"/>
    <property type="resolution" value="3.65 A"/>
    <property type="chains" value="T=1-91"/>
</dbReference>
<dbReference type="PDB" id="4V49">
    <property type="method" value="X-ray"/>
    <property type="resolution" value="8.70 A"/>
    <property type="chains" value="U=2-87"/>
</dbReference>
<dbReference type="PDB" id="4V4A">
    <property type="method" value="X-ray"/>
    <property type="resolution" value="9.50 A"/>
    <property type="chains" value="U=2-87"/>
</dbReference>
<dbReference type="PDB" id="4V4G">
    <property type="method" value="X-ray"/>
    <property type="resolution" value="11.50 A"/>
    <property type="chains" value="X=2-87"/>
</dbReference>
<dbReference type="PDB" id="4V4R">
    <property type="method" value="X-ray"/>
    <property type="resolution" value="5.90 A"/>
    <property type="chains" value="B0=1-91"/>
</dbReference>
<dbReference type="PDB" id="4V4S">
    <property type="method" value="X-ray"/>
    <property type="resolution" value="6.76 A"/>
    <property type="chains" value="B0=1-91"/>
</dbReference>
<dbReference type="PDB" id="4V4T">
    <property type="method" value="X-ray"/>
    <property type="resolution" value="6.46 A"/>
    <property type="chains" value="0=1-91"/>
</dbReference>
<dbReference type="PDB" id="4WFN">
    <property type="method" value="X-ray"/>
    <property type="resolution" value="3.54 A"/>
    <property type="chains" value="T=1-91"/>
</dbReference>
<dbReference type="PDB" id="5DM6">
    <property type="method" value="X-ray"/>
    <property type="resolution" value="2.90 A"/>
    <property type="chains" value="T=2-85"/>
</dbReference>
<dbReference type="PDB" id="5DM7">
    <property type="method" value="X-ray"/>
    <property type="resolution" value="3.00 A"/>
    <property type="chains" value="T=2-85"/>
</dbReference>
<dbReference type="PDB" id="5JVG">
    <property type="method" value="X-ray"/>
    <property type="resolution" value="3.43 A"/>
    <property type="chains" value="T=1-91"/>
</dbReference>
<dbReference type="PDB" id="5JVH">
    <property type="method" value="X-ray"/>
    <property type="resolution" value="3.58 A"/>
    <property type="chains" value="T=1-91"/>
</dbReference>
<dbReference type="PDB" id="7A0R">
    <property type="method" value="X-ray"/>
    <property type="resolution" value="3.30 A"/>
    <property type="chains" value="T=12-85"/>
</dbReference>
<dbReference type="PDB" id="7A0S">
    <property type="method" value="X-ray"/>
    <property type="resolution" value="3.22 A"/>
    <property type="chains" value="T=1-91"/>
</dbReference>
<dbReference type="PDB" id="7A18">
    <property type="method" value="X-ray"/>
    <property type="resolution" value="3.40 A"/>
    <property type="chains" value="T=12-83"/>
</dbReference>
<dbReference type="PDBsum" id="1NKW"/>
<dbReference type="PDBsum" id="1NWX"/>
<dbReference type="PDBsum" id="1NWY"/>
<dbReference type="PDBsum" id="1SM1"/>
<dbReference type="PDBsum" id="1XBP"/>
<dbReference type="PDBsum" id="1Y69"/>
<dbReference type="PDBsum" id="2ZJP"/>
<dbReference type="PDBsum" id="2ZJQ"/>
<dbReference type="PDBsum" id="2ZJR"/>
<dbReference type="PDBsum" id="3CF5"/>
<dbReference type="PDBsum" id="3DLL"/>
<dbReference type="PDBsum" id="3PIO"/>
<dbReference type="PDBsum" id="3PIP"/>
<dbReference type="PDBsum" id="4IO9"/>
<dbReference type="PDBsum" id="4IOA"/>
<dbReference type="PDBsum" id="4IOC"/>
<dbReference type="PDBsum" id="4U67"/>
<dbReference type="PDBsum" id="4V49"/>
<dbReference type="PDBsum" id="4V4A"/>
<dbReference type="PDBsum" id="4V4G"/>
<dbReference type="PDBsum" id="4V4R"/>
<dbReference type="PDBsum" id="4V4S"/>
<dbReference type="PDBsum" id="4V4T"/>
<dbReference type="PDBsum" id="4WFN"/>
<dbReference type="PDBsum" id="5DM6"/>
<dbReference type="PDBsum" id="5DM7"/>
<dbReference type="PDBsum" id="5JVG"/>
<dbReference type="PDBsum" id="5JVH"/>
<dbReference type="PDBsum" id="7A0R"/>
<dbReference type="PDBsum" id="7A0S"/>
<dbReference type="PDBsum" id="7A18"/>
<dbReference type="SMR" id="Q9RY65"/>
<dbReference type="FunCoup" id="Q9RY65">
    <property type="interactions" value="370"/>
</dbReference>
<dbReference type="IntAct" id="Q9RY65">
    <property type="interactions" value="1"/>
</dbReference>
<dbReference type="STRING" id="243230.DR_0085"/>
<dbReference type="PaxDb" id="243230-DR_0085"/>
<dbReference type="EnsemblBacteria" id="AAF09678">
    <property type="protein sequence ID" value="AAF09678"/>
    <property type="gene ID" value="DR_0085"/>
</dbReference>
<dbReference type="GeneID" id="69516316"/>
<dbReference type="KEGG" id="dra:DR_0085"/>
<dbReference type="PATRIC" id="fig|243230.17.peg.249"/>
<dbReference type="eggNOG" id="COG0211">
    <property type="taxonomic scope" value="Bacteria"/>
</dbReference>
<dbReference type="HOGENOM" id="CLU_095424_4_1_0"/>
<dbReference type="InParanoid" id="Q9RY65"/>
<dbReference type="OrthoDB" id="9803474at2"/>
<dbReference type="EvolutionaryTrace" id="Q9RY65"/>
<dbReference type="Proteomes" id="UP000002524">
    <property type="component" value="Chromosome 1"/>
</dbReference>
<dbReference type="GO" id="GO:0022625">
    <property type="term" value="C:cytosolic large ribosomal subunit"/>
    <property type="evidence" value="ECO:0000318"/>
    <property type="project" value="GO_Central"/>
</dbReference>
<dbReference type="GO" id="GO:0019843">
    <property type="term" value="F:rRNA binding"/>
    <property type="evidence" value="ECO:0007669"/>
    <property type="project" value="UniProtKB-KW"/>
</dbReference>
<dbReference type="GO" id="GO:0003735">
    <property type="term" value="F:structural constituent of ribosome"/>
    <property type="evidence" value="ECO:0000318"/>
    <property type="project" value="GO_Central"/>
</dbReference>
<dbReference type="GO" id="GO:0000049">
    <property type="term" value="F:tRNA binding"/>
    <property type="evidence" value="ECO:0007669"/>
    <property type="project" value="UniProtKB-KW"/>
</dbReference>
<dbReference type="GO" id="GO:0006412">
    <property type="term" value="P:translation"/>
    <property type="evidence" value="ECO:0007669"/>
    <property type="project" value="UniProtKB-UniRule"/>
</dbReference>
<dbReference type="DisProt" id="DP00886"/>
<dbReference type="FunFam" id="2.40.50.100:FF:000060">
    <property type="entry name" value="Apicoplast ribosomal protein L27"/>
    <property type="match status" value="1"/>
</dbReference>
<dbReference type="Gene3D" id="2.40.50.100">
    <property type="match status" value="1"/>
</dbReference>
<dbReference type="HAMAP" id="MF_00539">
    <property type="entry name" value="Ribosomal_bL27"/>
    <property type="match status" value="1"/>
</dbReference>
<dbReference type="InterPro" id="IPR001684">
    <property type="entry name" value="Ribosomal_bL27"/>
</dbReference>
<dbReference type="InterPro" id="IPR018261">
    <property type="entry name" value="Ribosomal_bL27_CS"/>
</dbReference>
<dbReference type="NCBIfam" id="TIGR00062">
    <property type="entry name" value="L27"/>
    <property type="match status" value="1"/>
</dbReference>
<dbReference type="PANTHER" id="PTHR15893:SF0">
    <property type="entry name" value="LARGE RIBOSOMAL SUBUNIT PROTEIN BL27M"/>
    <property type="match status" value="1"/>
</dbReference>
<dbReference type="PANTHER" id="PTHR15893">
    <property type="entry name" value="RIBOSOMAL PROTEIN L27"/>
    <property type="match status" value="1"/>
</dbReference>
<dbReference type="Pfam" id="PF01016">
    <property type="entry name" value="Ribosomal_L27"/>
    <property type="match status" value="1"/>
</dbReference>
<dbReference type="PRINTS" id="PR00063">
    <property type="entry name" value="RIBOSOMALL27"/>
</dbReference>
<dbReference type="SUPFAM" id="SSF110324">
    <property type="entry name" value="Ribosomal L27 protein-like"/>
    <property type="match status" value="1"/>
</dbReference>
<dbReference type="PROSITE" id="PS00831">
    <property type="entry name" value="RIBOSOMAL_L27"/>
    <property type="match status" value="1"/>
</dbReference>
<feature type="chain" id="PRO_0000181082" description="Large ribosomal subunit protein bL27">
    <location>
        <begin position="1"/>
        <end position="91"/>
    </location>
</feature>
<feature type="strand" evidence="9">
    <location>
        <begin position="22"/>
        <end position="25"/>
    </location>
</feature>
<feature type="strand" evidence="8">
    <location>
        <begin position="27"/>
        <end position="29"/>
    </location>
</feature>
<feature type="strand" evidence="9">
    <location>
        <begin position="36"/>
        <end position="39"/>
    </location>
</feature>
<feature type="strand" evidence="9">
    <location>
        <begin position="41"/>
        <end position="47"/>
    </location>
</feature>
<feature type="strand" evidence="9">
    <location>
        <begin position="51"/>
        <end position="53"/>
    </location>
</feature>
<feature type="strand" evidence="10">
    <location>
        <begin position="55"/>
        <end position="57"/>
    </location>
</feature>
<feature type="strand" evidence="9">
    <location>
        <begin position="59"/>
        <end position="63"/>
    </location>
</feature>
<feature type="strand" evidence="9">
    <location>
        <begin position="66"/>
        <end position="71"/>
    </location>
</feature>
<feature type="strand" evidence="9">
    <location>
        <begin position="73"/>
        <end position="75"/>
    </location>
</feature>
<feature type="strand" evidence="9">
    <location>
        <begin position="77"/>
        <end position="82"/>
    </location>
</feature>
<protein>
    <recommendedName>
        <fullName evidence="7">Large ribosomal subunit protein bL27</fullName>
    </recommendedName>
    <alternativeName>
        <fullName>50S ribosomal protein L27</fullName>
    </alternativeName>
</protein>
<organism>
    <name type="scientific">Deinococcus radiodurans (strain ATCC 13939 / DSM 20539 / JCM 16871 / CCUG 27074 / LMG 4051 / NBRC 15346 / NCIMB 9279 / VKM B-1422 / R1)</name>
    <dbReference type="NCBI Taxonomy" id="243230"/>
    <lineage>
        <taxon>Bacteria</taxon>
        <taxon>Thermotogati</taxon>
        <taxon>Deinococcota</taxon>
        <taxon>Deinococci</taxon>
        <taxon>Deinococcales</taxon>
        <taxon>Deinococcaceae</taxon>
        <taxon>Deinococcus</taxon>
    </lineage>
</organism>
<keyword id="KW-0002">3D-structure</keyword>
<keyword id="KW-0903">Direct protein sequencing</keyword>
<keyword id="KW-1185">Reference proteome</keyword>
<keyword id="KW-0687">Ribonucleoprotein</keyword>
<keyword id="KW-0689">Ribosomal protein</keyword>
<keyword id="KW-0694">RNA-binding</keyword>
<keyword id="KW-0699">rRNA-binding</keyword>
<keyword id="KW-0820">tRNA-binding</keyword>
<gene>
    <name type="primary">rpmA</name>
    <name type="ordered locus">DR_0085</name>
</gene>